<accession>B3Q8C0</accession>
<dbReference type="EMBL" id="CP001096">
    <property type="protein sequence ID" value="ACE98869.1"/>
    <property type="molecule type" value="Genomic_DNA"/>
</dbReference>
<dbReference type="RefSeq" id="WP_012494056.1">
    <property type="nucleotide sequence ID" value="NC_011004.1"/>
</dbReference>
<dbReference type="KEGG" id="rpt:Rpal_0309"/>
<dbReference type="HOGENOM" id="CLU_1395337_0_0_5"/>
<dbReference type="Proteomes" id="UP000001725">
    <property type="component" value="Chromosome"/>
</dbReference>
<dbReference type="GO" id="GO:0005886">
    <property type="term" value="C:plasma membrane"/>
    <property type="evidence" value="ECO:0007669"/>
    <property type="project" value="UniProtKB-SubCell"/>
</dbReference>
<dbReference type="HAMAP" id="MF_01514">
    <property type="entry name" value="UPF0314"/>
    <property type="match status" value="1"/>
</dbReference>
<dbReference type="InterPro" id="IPR019691">
    <property type="entry name" value="DUF2585"/>
</dbReference>
<dbReference type="NCBIfam" id="NF002099">
    <property type="entry name" value="PRK00944.1"/>
    <property type="match status" value="1"/>
</dbReference>
<dbReference type="Pfam" id="PF10755">
    <property type="entry name" value="DUF2585"/>
    <property type="match status" value="1"/>
</dbReference>
<proteinExistence type="inferred from homology"/>
<feature type="chain" id="PRO_1000198414" description="UPF0314 protein Rpal_0309">
    <location>
        <begin position="1"/>
        <end position="203"/>
    </location>
</feature>
<feature type="transmembrane region" description="Helical" evidence="1">
    <location>
        <begin position="20"/>
        <end position="40"/>
    </location>
</feature>
<feature type="transmembrane region" description="Helical" evidence="1">
    <location>
        <begin position="69"/>
        <end position="89"/>
    </location>
</feature>
<feature type="transmembrane region" description="Helical" evidence="1">
    <location>
        <begin position="155"/>
        <end position="175"/>
    </location>
</feature>
<sequence length="203" mass="22420">MSMAGAERPVSSAAGLPVRWALAVVLALLAIQATALFAMGRVPICTCGTVKLWHGVVQSSENSQHLTDWYTFSHIIHGFLFYAGTWLLLRRWSWTARLIVATLIEGGWELTENSSFIIERYRAGTISLDYYGDSIVNSVADTLAMISGFLLARWLPIAATVAIAVLFEVLVGLHIRDNLTLNVIMLIHPFDAIRQWQAGPPII</sequence>
<keyword id="KW-1003">Cell membrane</keyword>
<keyword id="KW-0472">Membrane</keyword>
<keyword id="KW-0812">Transmembrane</keyword>
<keyword id="KW-1133">Transmembrane helix</keyword>
<organism>
    <name type="scientific">Rhodopseudomonas palustris (strain TIE-1)</name>
    <dbReference type="NCBI Taxonomy" id="395960"/>
    <lineage>
        <taxon>Bacteria</taxon>
        <taxon>Pseudomonadati</taxon>
        <taxon>Pseudomonadota</taxon>
        <taxon>Alphaproteobacteria</taxon>
        <taxon>Hyphomicrobiales</taxon>
        <taxon>Nitrobacteraceae</taxon>
        <taxon>Rhodopseudomonas</taxon>
    </lineage>
</organism>
<gene>
    <name type="ordered locus">Rpal_0309</name>
</gene>
<evidence type="ECO:0000255" key="1">
    <source>
        <dbReference type="HAMAP-Rule" id="MF_01514"/>
    </source>
</evidence>
<protein>
    <recommendedName>
        <fullName evidence="1">UPF0314 protein Rpal_0309</fullName>
    </recommendedName>
</protein>
<name>Y309_RHOPT</name>
<comment type="subcellular location">
    <subcellularLocation>
        <location evidence="1">Cell membrane</location>
        <topology evidence="1">Multi-pass membrane protein</topology>
    </subcellularLocation>
</comment>
<comment type="similarity">
    <text evidence="1">Belongs to the UPF0314 family.</text>
</comment>
<reference key="1">
    <citation type="submission" date="2008-05" db="EMBL/GenBank/DDBJ databases">
        <title>Complete sequence of Rhodopseudomonas palustris TIE-1.</title>
        <authorList>
            <consortium name="US DOE Joint Genome Institute"/>
            <person name="Lucas S."/>
            <person name="Copeland A."/>
            <person name="Lapidus A."/>
            <person name="Glavina del Rio T."/>
            <person name="Dalin E."/>
            <person name="Tice H."/>
            <person name="Pitluck S."/>
            <person name="Chain P."/>
            <person name="Malfatti S."/>
            <person name="Shin M."/>
            <person name="Vergez L."/>
            <person name="Lang D."/>
            <person name="Schmutz J."/>
            <person name="Larimer F."/>
            <person name="Land M."/>
            <person name="Hauser L."/>
            <person name="Kyrpides N."/>
            <person name="Mikhailova N."/>
            <person name="Emerson D."/>
            <person name="Newman D.K."/>
            <person name="Roden E."/>
            <person name="Richardson P."/>
        </authorList>
    </citation>
    <scope>NUCLEOTIDE SEQUENCE [LARGE SCALE GENOMIC DNA]</scope>
    <source>
        <strain>TIE-1</strain>
    </source>
</reference>